<evidence type="ECO:0000255" key="1"/>
<evidence type="ECO:0000269" key="2">
    <source>
    </source>
</evidence>
<evidence type="ECO:0000305" key="3"/>
<feature type="chain" id="PRO_0000173440" description="Probable drug/proton antiporter YHK8">
    <location>
        <begin position="1"/>
        <end position="514"/>
    </location>
</feature>
<feature type="topological domain" description="Cytoplasmic" evidence="1">
    <location>
        <begin position="1"/>
        <end position="74"/>
    </location>
</feature>
<feature type="transmembrane region" description="Helical" evidence="1">
    <location>
        <begin position="75"/>
        <end position="95"/>
    </location>
</feature>
<feature type="topological domain" description="Extracellular" evidence="1">
    <location>
        <begin position="96"/>
        <end position="111"/>
    </location>
</feature>
<feature type="transmembrane region" description="Helical" evidence="1">
    <location>
        <begin position="112"/>
        <end position="132"/>
    </location>
</feature>
<feature type="topological domain" description="Cytoplasmic" evidence="1">
    <location>
        <begin position="133"/>
        <end position="141"/>
    </location>
</feature>
<feature type="transmembrane region" description="Helical" evidence="1">
    <location>
        <begin position="142"/>
        <end position="162"/>
    </location>
</feature>
<feature type="topological domain" description="Extracellular" evidence="1">
    <location>
        <begin position="163"/>
        <end position="170"/>
    </location>
</feature>
<feature type="transmembrane region" description="Helical" evidence="1">
    <location>
        <begin position="171"/>
        <end position="191"/>
    </location>
</feature>
<feature type="topological domain" description="Cytoplasmic" evidence="1">
    <location>
        <begin position="192"/>
        <end position="200"/>
    </location>
</feature>
<feature type="transmembrane region" description="Helical" evidence="1">
    <location>
        <begin position="201"/>
        <end position="221"/>
    </location>
</feature>
<feature type="topological domain" description="Extracellular" evidence="1">
    <location>
        <begin position="222"/>
        <end position="227"/>
    </location>
</feature>
<feature type="transmembrane region" description="Helical" evidence="1">
    <location>
        <begin position="228"/>
        <end position="248"/>
    </location>
</feature>
<feature type="topological domain" description="Cytoplasmic" evidence="1">
    <location>
        <begin position="249"/>
        <end position="307"/>
    </location>
</feature>
<feature type="transmembrane region" description="Helical" evidence="1">
    <location>
        <begin position="308"/>
        <end position="328"/>
    </location>
</feature>
<feature type="topological domain" description="Extracellular" evidence="1">
    <location>
        <begin position="329"/>
        <end position="342"/>
    </location>
</feature>
<feature type="transmembrane region" description="Helical" evidence="1">
    <location>
        <begin position="343"/>
        <end position="363"/>
    </location>
</feature>
<feature type="topological domain" description="Cytoplasmic" evidence="1">
    <location>
        <begin position="364"/>
        <end position="386"/>
    </location>
</feature>
<feature type="transmembrane region" description="Helical" evidence="1">
    <location>
        <begin position="387"/>
        <end position="407"/>
    </location>
</feature>
<feature type="topological domain" description="Extracellular" evidence="1">
    <location>
        <begin position="408"/>
        <end position="412"/>
    </location>
</feature>
<feature type="transmembrane region" description="Helical" evidence="1">
    <location>
        <begin position="413"/>
        <end position="433"/>
    </location>
</feature>
<feature type="topological domain" description="Cytoplasmic" evidence="1">
    <location>
        <begin position="434"/>
        <end position="447"/>
    </location>
</feature>
<feature type="transmembrane region" description="Helical" evidence="1">
    <location>
        <begin position="448"/>
        <end position="468"/>
    </location>
</feature>
<feature type="topological domain" description="Extracellular" evidence="1">
    <location>
        <begin position="469"/>
        <end position="477"/>
    </location>
</feature>
<feature type="transmembrane region" description="Helical" evidence="1">
    <location>
        <begin position="478"/>
        <end position="498"/>
    </location>
</feature>
<feature type="topological domain" description="Cytoplasmic" evidence="1">
    <location>
        <begin position="499"/>
        <end position="514"/>
    </location>
</feature>
<dbReference type="EMBL" id="U00062">
    <property type="protein sequence ID" value="AAB68902.1"/>
    <property type="molecule type" value="Genomic_DNA"/>
</dbReference>
<dbReference type="EMBL" id="BK006934">
    <property type="protein sequence ID" value="DAA06740.1"/>
    <property type="molecule type" value="Genomic_DNA"/>
</dbReference>
<dbReference type="PIR" id="S46733">
    <property type="entry name" value="S46733"/>
</dbReference>
<dbReference type="RefSeq" id="NP_011914.1">
    <property type="nucleotide sequence ID" value="NM_001179178.1"/>
</dbReference>
<dbReference type="BioGRID" id="36480">
    <property type="interactions" value="87"/>
</dbReference>
<dbReference type="DIP" id="DIP-8197N"/>
<dbReference type="FunCoup" id="P38776">
    <property type="interactions" value="58"/>
</dbReference>
<dbReference type="IntAct" id="P38776">
    <property type="interactions" value="1"/>
</dbReference>
<dbReference type="MINT" id="P38776"/>
<dbReference type="STRING" id="4932.YHR048W"/>
<dbReference type="TCDB" id="2.A.1.2.63">
    <property type="family name" value="the major facilitator superfamily (mfs)"/>
</dbReference>
<dbReference type="iPTMnet" id="P38776"/>
<dbReference type="PaxDb" id="4932-YHR048W"/>
<dbReference type="PeptideAtlas" id="P38776"/>
<dbReference type="EnsemblFungi" id="YHR048W_mRNA">
    <property type="protein sequence ID" value="YHR048W"/>
    <property type="gene ID" value="YHR048W"/>
</dbReference>
<dbReference type="GeneID" id="856444"/>
<dbReference type="KEGG" id="sce:YHR048W"/>
<dbReference type="AGR" id="SGD:S000001090"/>
<dbReference type="SGD" id="S000001090">
    <property type="gene designation" value="YHK8"/>
</dbReference>
<dbReference type="VEuPathDB" id="FungiDB:YHR048W"/>
<dbReference type="eggNOG" id="KOG0255">
    <property type="taxonomic scope" value="Eukaryota"/>
</dbReference>
<dbReference type="HOGENOM" id="CLU_008455_11_1_1"/>
<dbReference type="InParanoid" id="P38776"/>
<dbReference type="OMA" id="HELQAPM"/>
<dbReference type="OrthoDB" id="9986881at2759"/>
<dbReference type="BioCyc" id="YEAST:G3O-31103-MONOMER"/>
<dbReference type="BioGRID-ORCS" id="856444">
    <property type="hits" value="5 hits in 10 CRISPR screens"/>
</dbReference>
<dbReference type="PRO" id="PR:P38776"/>
<dbReference type="Proteomes" id="UP000002311">
    <property type="component" value="Chromosome VIII"/>
</dbReference>
<dbReference type="RNAct" id="P38776">
    <property type="molecule type" value="protein"/>
</dbReference>
<dbReference type="GO" id="GO:0071944">
    <property type="term" value="C:cell periphery"/>
    <property type="evidence" value="ECO:0007005"/>
    <property type="project" value="SGD"/>
</dbReference>
<dbReference type="GO" id="GO:0005886">
    <property type="term" value="C:plasma membrane"/>
    <property type="evidence" value="ECO:0000250"/>
    <property type="project" value="SGD"/>
</dbReference>
<dbReference type="GO" id="GO:0015297">
    <property type="term" value="F:antiporter activity"/>
    <property type="evidence" value="ECO:0007669"/>
    <property type="project" value="UniProtKB-KW"/>
</dbReference>
<dbReference type="GO" id="GO:0022857">
    <property type="term" value="F:transmembrane transporter activity"/>
    <property type="evidence" value="ECO:0000318"/>
    <property type="project" value="GO_Central"/>
</dbReference>
<dbReference type="GO" id="GO:1902600">
    <property type="term" value="P:proton transmembrane transport"/>
    <property type="evidence" value="ECO:0007669"/>
    <property type="project" value="UniProtKB-KW"/>
</dbReference>
<dbReference type="GO" id="GO:0055085">
    <property type="term" value="P:transmembrane transport"/>
    <property type="evidence" value="ECO:0000318"/>
    <property type="project" value="GO_Central"/>
</dbReference>
<dbReference type="GO" id="GO:1990961">
    <property type="term" value="P:xenobiotic detoxification by transmembrane export across the plasma membrane"/>
    <property type="evidence" value="ECO:0000247"/>
    <property type="project" value="SGD"/>
</dbReference>
<dbReference type="CDD" id="cd17323">
    <property type="entry name" value="MFS_Tpo1_MDR_like"/>
    <property type="match status" value="1"/>
</dbReference>
<dbReference type="FunFam" id="1.20.1250.20:FF:000082">
    <property type="entry name" value="MFS multidrug transporter, putative"/>
    <property type="match status" value="1"/>
</dbReference>
<dbReference type="Gene3D" id="1.20.1250.20">
    <property type="entry name" value="MFS general substrate transporter like domains"/>
    <property type="match status" value="1"/>
</dbReference>
<dbReference type="InterPro" id="IPR011701">
    <property type="entry name" value="MFS"/>
</dbReference>
<dbReference type="InterPro" id="IPR020846">
    <property type="entry name" value="MFS_dom"/>
</dbReference>
<dbReference type="InterPro" id="IPR036259">
    <property type="entry name" value="MFS_trans_sf"/>
</dbReference>
<dbReference type="InterPro" id="IPR005829">
    <property type="entry name" value="Sugar_transporter_CS"/>
</dbReference>
<dbReference type="PANTHER" id="PTHR23502:SF7">
    <property type="entry name" value="DRUG_PROTON ANTIPORTER YHK8-RELATED"/>
    <property type="match status" value="1"/>
</dbReference>
<dbReference type="PANTHER" id="PTHR23502">
    <property type="entry name" value="MAJOR FACILITATOR SUPERFAMILY"/>
    <property type="match status" value="1"/>
</dbReference>
<dbReference type="Pfam" id="PF07690">
    <property type="entry name" value="MFS_1"/>
    <property type="match status" value="1"/>
</dbReference>
<dbReference type="SUPFAM" id="SSF103473">
    <property type="entry name" value="MFS general substrate transporter"/>
    <property type="match status" value="1"/>
</dbReference>
<dbReference type="PROSITE" id="PS50850">
    <property type="entry name" value="MFS"/>
    <property type="match status" value="1"/>
</dbReference>
<reference key="1">
    <citation type="journal article" date="1994" name="Science">
        <title>Complete nucleotide sequence of Saccharomyces cerevisiae chromosome VIII.</title>
        <authorList>
            <person name="Johnston M."/>
            <person name="Andrews S."/>
            <person name="Brinkman R."/>
            <person name="Cooper J."/>
            <person name="Ding H."/>
            <person name="Dover J."/>
            <person name="Du Z."/>
            <person name="Favello A."/>
            <person name="Fulton L."/>
            <person name="Gattung S."/>
            <person name="Geisel C."/>
            <person name="Kirsten J."/>
            <person name="Kucaba T."/>
            <person name="Hillier L.W."/>
            <person name="Jier M."/>
            <person name="Johnston L."/>
            <person name="Langston Y."/>
            <person name="Latreille P."/>
            <person name="Louis E.J."/>
            <person name="Macri C."/>
            <person name="Mardis E."/>
            <person name="Menezes S."/>
            <person name="Mouser L."/>
            <person name="Nhan M."/>
            <person name="Rifkin L."/>
            <person name="Riles L."/>
            <person name="St Peter H."/>
            <person name="Trevaskis E."/>
            <person name="Vaughan K."/>
            <person name="Vignati D."/>
            <person name="Wilcox L."/>
            <person name="Wohldman P."/>
            <person name="Waterston R."/>
            <person name="Wilson R."/>
            <person name="Vaudin M."/>
        </authorList>
    </citation>
    <scope>NUCLEOTIDE SEQUENCE [LARGE SCALE GENOMIC DNA]</scope>
    <source>
        <strain>ATCC 204508 / S288c</strain>
    </source>
</reference>
<reference key="2">
    <citation type="journal article" date="2014" name="G3 (Bethesda)">
        <title>The reference genome sequence of Saccharomyces cerevisiae: Then and now.</title>
        <authorList>
            <person name="Engel S.R."/>
            <person name="Dietrich F.S."/>
            <person name="Fisk D.G."/>
            <person name="Binkley G."/>
            <person name="Balakrishnan R."/>
            <person name="Costanzo M.C."/>
            <person name="Dwight S.S."/>
            <person name="Hitz B.C."/>
            <person name="Karra K."/>
            <person name="Nash R.S."/>
            <person name="Weng S."/>
            <person name="Wong E.D."/>
            <person name="Lloyd P."/>
            <person name="Skrzypek M.S."/>
            <person name="Miyasato S.R."/>
            <person name="Simison M."/>
            <person name="Cherry J.M."/>
        </authorList>
    </citation>
    <scope>GENOME REANNOTATION</scope>
    <source>
        <strain>ATCC 204508 / S288c</strain>
    </source>
</reference>
<reference key="3">
    <citation type="journal article" date="2003" name="J. Antimicrob. Chemother.">
        <title>Identification of genes differentially expressed in association with reduced azole susceptibility in Saccharomyces cerevisiae.</title>
        <authorList>
            <person name="Barker K.S."/>
            <person name="Pearson M.M."/>
            <person name="Rogers P.D."/>
        </authorList>
    </citation>
    <scope>INDUCTION</scope>
</reference>
<reference key="4">
    <citation type="journal article" date="2006" name="FEMS Yeast Res.">
        <title>Evolution of gene families: the multidrug resistance transporter genes in five related yeast species.</title>
        <authorList>
            <person name="Gbelska Y."/>
            <person name="Krijger J.J."/>
            <person name="Breunig K.D."/>
        </authorList>
    </citation>
    <scope>PREDICTION OF FUNCTION</scope>
</reference>
<reference key="5">
    <citation type="journal article" date="2006" name="Proc. Natl. Acad. Sci. U.S.A.">
        <title>A global topology map of the Saccharomyces cerevisiae membrane proteome.</title>
        <authorList>
            <person name="Kim H."/>
            <person name="Melen K."/>
            <person name="Oesterberg M."/>
            <person name="von Heijne G."/>
        </authorList>
    </citation>
    <scope>TOPOLOGY [LARGE SCALE ANALYSIS]</scope>
    <source>
        <strain>ATCC 208353 / W303-1A</strain>
    </source>
</reference>
<name>YHK8_YEAST</name>
<comment type="function">
    <text>Probable drug/proton antiporter.</text>
</comment>
<comment type="subcellular location">
    <subcellularLocation>
        <location>Membrane</location>
        <topology>Multi-pass membrane protein</topology>
    </subcellularLocation>
</comment>
<comment type="induction">
    <text evidence="2">Up-regulated in cells exhibiting reduced susceptibility to azoles.</text>
</comment>
<comment type="similarity">
    <text evidence="3">Belongs to the major facilitator superfamily. CAR1 family.</text>
</comment>
<sequence length="514" mass="57838">MVAEFQIASAQSSALTSTEEEHCSINSDKAAKLDLELTSERKNDGKQSHEVTFNEDIADPEDIARHMSTARRYYISSLITFTSMVITMISSSWTLPSTHIIEHFHISHEVSTLGITLYVFGLGIGPLFLSPLSELYGRRITFLYALTLSIIWQCLTIWSKTITGVMFGRFLSGFFGSAFLSVAGGAIADIFDKDQIGIPMAIYTTSAFLGPSLGPIIGGALYHQSYKWTFITLLITSGCCLVMIIFTIPETYKPMLLIRKAKRLRKEKNDQRYYAVLEVTREQTSLLSAIFLSTKRPFGLLLRDRMMGVLCFYTGLELAIIYLYFVAFPYVFKKLYNFGPMEIACSYIGIMVGMILSAPTCLLFQKTFEWRVKRNNGVKTPEMRFEPLFYGAFLTPVGLFIFAFTCYKHVHWIAPIIGSAIFGSGVYFVFTGVFAYTVDAYRRYAASGMACNTFVRCIMAGVFPLFGLQMYKSMGVNWAGFLLAMVTVAMIPVPFLFTKYGARLRAKSPYAWDD</sequence>
<organism>
    <name type="scientific">Saccharomyces cerevisiae (strain ATCC 204508 / S288c)</name>
    <name type="common">Baker's yeast</name>
    <dbReference type="NCBI Taxonomy" id="559292"/>
    <lineage>
        <taxon>Eukaryota</taxon>
        <taxon>Fungi</taxon>
        <taxon>Dikarya</taxon>
        <taxon>Ascomycota</taxon>
        <taxon>Saccharomycotina</taxon>
        <taxon>Saccharomycetes</taxon>
        <taxon>Saccharomycetales</taxon>
        <taxon>Saccharomycetaceae</taxon>
        <taxon>Saccharomyces</taxon>
    </lineage>
</organism>
<proteinExistence type="evidence at protein level"/>
<protein>
    <recommendedName>
        <fullName>Probable drug/proton antiporter YHK8</fullName>
    </recommendedName>
</protein>
<accession>P38776</accession>
<accession>D3DKZ6</accession>
<keyword id="KW-0050">Antiport</keyword>
<keyword id="KW-0375">Hydrogen ion transport</keyword>
<keyword id="KW-0406">Ion transport</keyword>
<keyword id="KW-0472">Membrane</keyword>
<keyword id="KW-1185">Reference proteome</keyword>
<keyword id="KW-0812">Transmembrane</keyword>
<keyword id="KW-1133">Transmembrane helix</keyword>
<keyword id="KW-0813">Transport</keyword>
<gene>
    <name type="primary">YHK8</name>
    <name type="ordered locus">YHR048W</name>
</gene>